<accession>Q01IX6</accession>
<accession>A2XUL4</accession>
<organism>
    <name type="scientific">Oryza sativa subsp. indica</name>
    <name type="common">Rice</name>
    <dbReference type="NCBI Taxonomy" id="39946"/>
    <lineage>
        <taxon>Eukaryota</taxon>
        <taxon>Viridiplantae</taxon>
        <taxon>Streptophyta</taxon>
        <taxon>Embryophyta</taxon>
        <taxon>Tracheophyta</taxon>
        <taxon>Spermatophyta</taxon>
        <taxon>Magnoliopsida</taxon>
        <taxon>Liliopsida</taxon>
        <taxon>Poales</taxon>
        <taxon>Poaceae</taxon>
        <taxon>BOP clade</taxon>
        <taxon>Oryzoideae</taxon>
        <taxon>Oryzeae</taxon>
        <taxon>Oryzinae</taxon>
        <taxon>Oryza</taxon>
        <taxon>Oryza sativa</taxon>
    </lineage>
</organism>
<sequence length="300" mass="32102">MVEIPAIDLRLAGGGGGAEETARLRDACARLGCFRVSGHGVPPGLQAEMKAAVRALFDLPDDAKRRNADIIPGSGYVPPGTANPLYEAFGLCDAAAPADVDAFCARLDAPPHVRETVKAYAERMHSLIVDVAGKVAASLGLHGASFQDWPCQFRMNRYNYTQDSVGSPGVQVHTDSGFLTVLQEDECVGGLEVLDPAAGEFVPVDPLPGSFVVNVGDVGQAWSNGRLHNVKHRVQCVAAVPRVSIAMFLLAPKDDTVSAPGELVDGEHPRRYREFKYDDYRRLRLSTGERAGEALARLAA</sequence>
<keyword id="KW-0223">Dioxygenase</keyword>
<keyword id="KW-0408">Iron</keyword>
<keyword id="KW-0479">Metal-binding</keyword>
<keyword id="KW-0560">Oxidoreductase</keyword>
<keyword id="KW-1185">Reference proteome</keyword>
<comment type="function">
    <text evidence="1">2-oxoglutarate-dependent dioxygenase essential for auxin catabolism and maintenance of auxin homeostasis in reproductive organs. Catalyzes the irreversible oxidation of indole-3-acetic acid (IAA) to the biologically inactive 2-oxoindole-3-acetic acid (OxIAA) (By similarity).</text>
</comment>
<comment type="cofactor">
    <cofactor evidence="2">
        <name>Fe(2+)</name>
        <dbReference type="ChEBI" id="CHEBI:29033"/>
    </cofactor>
    <text evidence="2">Binds 1 Fe(2+) ion per subunit.</text>
</comment>
<comment type="similarity">
    <text evidence="3">Belongs to the iron/ascorbate-dependent oxidoreductase family.</text>
</comment>
<gene>
    <name type="primary">DAO</name>
    <name type="ORF">OsI_16300</name>
    <name type="ORF">OSIGBa0106G07.8</name>
</gene>
<feature type="chain" id="PRO_0000424611" description="2-oxoglutarate-dependent dioxygenase DAO">
    <location>
        <begin position="1"/>
        <end position="300"/>
    </location>
</feature>
<feature type="domain" description="Fe2OG dioxygenase" evidence="2">
    <location>
        <begin position="149"/>
        <end position="252"/>
    </location>
</feature>
<feature type="binding site" evidence="2">
    <location>
        <position position="173"/>
    </location>
    <ligand>
        <name>Fe cation</name>
        <dbReference type="ChEBI" id="CHEBI:24875"/>
    </ligand>
</feature>
<feature type="binding site" evidence="2">
    <location>
        <position position="175"/>
    </location>
    <ligand>
        <name>Fe cation</name>
        <dbReference type="ChEBI" id="CHEBI:24875"/>
    </ligand>
</feature>
<feature type="binding site" evidence="2">
    <location>
        <position position="232"/>
    </location>
    <ligand>
        <name>Fe cation</name>
        <dbReference type="ChEBI" id="CHEBI:24875"/>
    </ligand>
</feature>
<feature type="binding site" evidence="2">
    <location>
        <position position="242"/>
    </location>
    <ligand>
        <name>2-oxoglutarate</name>
        <dbReference type="ChEBI" id="CHEBI:16810"/>
    </ligand>
</feature>
<reference key="1">
    <citation type="journal article" date="2002" name="Nature">
        <title>Sequence and analysis of rice chromosome 4.</title>
        <authorList>
            <person name="Feng Q."/>
            <person name="Zhang Y."/>
            <person name="Hao P."/>
            <person name="Wang S."/>
            <person name="Fu G."/>
            <person name="Huang Y."/>
            <person name="Li Y."/>
            <person name="Zhu J."/>
            <person name="Liu Y."/>
            <person name="Hu X."/>
            <person name="Jia P."/>
            <person name="Zhang Y."/>
            <person name="Zhao Q."/>
            <person name="Ying K."/>
            <person name="Yu S."/>
            <person name="Tang Y."/>
            <person name="Weng Q."/>
            <person name="Zhang L."/>
            <person name="Lu Y."/>
            <person name="Mu J."/>
            <person name="Lu Y."/>
            <person name="Zhang L.S."/>
            <person name="Yu Z."/>
            <person name="Fan D."/>
            <person name="Liu X."/>
            <person name="Lu T."/>
            <person name="Li C."/>
            <person name="Wu Y."/>
            <person name="Sun T."/>
            <person name="Lei H."/>
            <person name="Li T."/>
            <person name="Hu H."/>
            <person name="Guan J."/>
            <person name="Wu M."/>
            <person name="Zhang R."/>
            <person name="Zhou B."/>
            <person name="Chen Z."/>
            <person name="Chen L."/>
            <person name="Jin Z."/>
            <person name="Wang R."/>
            <person name="Yin H."/>
            <person name="Cai Z."/>
            <person name="Ren S."/>
            <person name="Lv G."/>
            <person name="Gu W."/>
            <person name="Zhu G."/>
            <person name="Tu Y."/>
            <person name="Jia J."/>
            <person name="Zhang Y."/>
            <person name="Chen J."/>
            <person name="Kang H."/>
            <person name="Chen X."/>
            <person name="Shao C."/>
            <person name="Sun Y."/>
            <person name="Hu Q."/>
            <person name="Zhang X."/>
            <person name="Zhang W."/>
            <person name="Wang L."/>
            <person name="Ding C."/>
            <person name="Sheng H."/>
            <person name="Gu J."/>
            <person name="Chen S."/>
            <person name="Ni L."/>
            <person name="Zhu F."/>
            <person name="Chen W."/>
            <person name="Lan L."/>
            <person name="Lai Y."/>
            <person name="Cheng Z."/>
            <person name="Gu M."/>
            <person name="Jiang J."/>
            <person name="Li J."/>
            <person name="Hong G."/>
            <person name="Xue Y."/>
            <person name="Han B."/>
        </authorList>
    </citation>
    <scope>NUCLEOTIDE SEQUENCE [LARGE SCALE GENOMIC DNA]</scope>
    <source>
        <strain>cv. Guang-Lu-Ai No.4</strain>
    </source>
</reference>
<reference key="2">
    <citation type="journal article" date="2005" name="PLoS Biol.">
        <title>The genomes of Oryza sativa: a history of duplications.</title>
        <authorList>
            <person name="Yu J."/>
            <person name="Wang J."/>
            <person name="Lin W."/>
            <person name="Li S."/>
            <person name="Li H."/>
            <person name="Zhou J."/>
            <person name="Ni P."/>
            <person name="Dong W."/>
            <person name="Hu S."/>
            <person name="Zeng C."/>
            <person name="Zhang J."/>
            <person name="Zhang Y."/>
            <person name="Li R."/>
            <person name="Xu Z."/>
            <person name="Li S."/>
            <person name="Li X."/>
            <person name="Zheng H."/>
            <person name="Cong L."/>
            <person name="Lin L."/>
            <person name="Yin J."/>
            <person name="Geng J."/>
            <person name="Li G."/>
            <person name="Shi J."/>
            <person name="Liu J."/>
            <person name="Lv H."/>
            <person name="Li J."/>
            <person name="Wang J."/>
            <person name="Deng Y."/>
            <person name="Ran L."/>
            <person name="Shi X."/>
            <person name="Wang X."/>
            <person name="Wu Q."/>
            <person name="Li C."/>
            <person name="Ren X."/>
            <person name="Wang J."/>
            <person name="Wang X."/>
            <person name="Li D."/>
            <person name="Liu D."/>
            <person name="Zhang X."/>
            <person name="Ji Z."/>
            <person name="Zhao W."/>
            <person name="Sun Y."/>
            <person name="Zhang Z."/>
            <person name="Bao J."/>
            <person name="Han Y."/>
            <person name="Dong L."/>
            <person name="Ji J."/>
            <person name="Chen P."/>
            <person name="Wu S."/>
            <person name="Liu J."/>
            <person name="Xiao Y."/>
            <person name="Bu D."/>
            <person name="Tan J."/>
            <person name="Yang L."/>
            <person name="Ye C."/>
            <person name="Zhang J."/>
            <person name="Xu J."/>
            <person name="Zhou Y."/>
            <person name="Yu Y."/>
            <person name="Zhang B."/>
            <person name="Zhuang S."/>
            <person name="Wei H."/>
            <person name="Liu B."/>
            <person name="Lei M."/>
            <person name="Yu H."/>
            <person name="Li Y."/>
            <person name="Xu H."/>
            <person name="Wei S."/>
            <person name="He X."/>
            <person name="Fang L."/>
            <person name="Zhang Z."/>
            <person name="Zhang Y."/>
            <person name="Huang X."/>
            <person name="Su Z."/>
            <person name="Tong W."/>
            <person name="Li J."/>
            <person name="Tong Z."/>
            <person name="Li S."/>
            <person name="Ye J."/>
            <person name="Wang L."/>
            <person name="Fang L."/>
            <person name="Lei T."/>
            <person name="Chen C.-S."/>
            <person name="Chen H.-C."/>
            <person name="Xu Z."/>
            <person name="Li H."/>
            <person name="Huang H."/>
            <person name="Zhang F."/>
            <person name="Xu H."/>
            <person name="Li N."/>
            <person name="Zhao C."/>
            <person name="Li S."/>
            <person name="Dong L."/>
            <person name="Huang Y."/>
            <person name="Li L."/>
            <person name="Xi Y."/>
            <person name="Qi Q."/>
            <person name="Li W."/>
            <person name="Zhang B."/>
            <person name="Hu W."/>
            <person name="Zhang Y."/>
            <person name="Tian X."/>
            <person name="Jiao Y."/>
            <person name="Liang X."/>
            <person name="Jin J."/>
            <person name="Gao L."/>
            <person name="Zheng W."/>
            <person name="Hao B."/>
            <person name="Liu S.-M."/>
            <person name="Wang W."/>
            <person name="Yuan L."/>
            <person name="Cao M."/>
            <person name="McDermott J."/>
            <person name="Samudrala R."/>
            <person name="Wang J."/>
            <person name="Wong G.K.-S."/>
            <person name="Yang H."/>
        </authorList>
    </citation>
    <scope>NUCLEOTIDE SEQUENCE [LARGE SCALE GENOMIC DNA]</scope>
    <source>
        <strain>cv. 93-11</strain>
    </source>
</reference>
<protein>
    <recommendedName>
        <fullName>2-oxoglutarate-dependent dioxygenase DAO</fullName>
        <ecNumber>1.14.11.-</ecNumber>
    </recommendedName>
    <alternativeName>
        <fullName>Protein DIOXYGENASE FOR AUXIN OXIDATION</fullName>
    </alternativeName>
</protein>
<name>DAO_ORYSI</name>
<evidence type="ECO:0000250" key="1"/>
<evidence type="ECO:0000255" key="2">
    <source>
        <dbReference type="PROSITE-ProRule" id="PRU00805"/>
    </source>
</evidence>
<evidence type="ECO:0000305" key="3"/>
<dbReference type="EC" id="1.14.11.-"/>
<dbReference type="EMBL" id="CR855189">
    <property type="protein sequence ID" value="CAH67312.1"/>
    <property type="molecule type" value="Genomic_DNA"/>
</dbReference>
<dbReference type="EMBL" id="CM000129">
    <property type="protein sequence ID" value="EAY94524.1"/>
    <property type="molecule type" value="Genomic_DNA"/>
</dbReference>
<dbReference type="SMR" id="Q01IX6"/>
<dbReference type="STRING" id="39946.Q01IX6"/>
<dbReference type="EnsemblPlants" id="BGIOSGA014888-TA">
    <property type="protein sequence ID" value="BGIOSGA014888-PA"/>
    <property type="gene ID" value="BGIOSGA014888"/>
</dbReference>
<dbReference type="Gramene" id="BGIOSGA014888-TA">
    <property type="protein sequence ID" value="BGIOSGA014888-PA"/>
    <property type="gene ID" value="BGIOSGA014888"/>
</dbReference>
<dbReference type="HOGENOM" id="CLU_010119_3_2_1"/>
<dbReference type="OMA" id="YKAFTYG"/>
<dbReference type="Proteomes" id="UP000007015">
    <property type="component" value="Chromosome 4"/>
</dbReference>
<dbReference type="GO" id="GO:0051213">
    <property type="term" value="F:dioxygenase activity"/>
    <property type="evidence" value="ECO:0007669"/>
    <property type="project" value="UniProtKB-KW"/>
</dbReference>
<dbReference type="GO" id="GO:0046872">
    <property type="term" value="F:metal ion binding"/>
    <property type="evidence" value="ECO:0007669"/>
    <property type="project" value="UniProtKB-KW"/>
</dbReference>
<dbReference type="GO" id="GO:0009852">
    <property type="term" value="P:auxin catabolic process"/>
    <property type="evidence" value="ECO:0007669"/>
    <property type="project" value="EnsemblPlants"/>
</dbReference>
<dbReference type="FunFam" id="2.60.120.330:FF:000017">
    <property type="entry name" value="2-oxoglutarate-dependent dioxygenase DAO"/>
    <property type="match status" value="1"/>
</dbReference>
<dbReference type="Gene3D" id="2.60.120.330">
    <property type="entry name" value="B-lactam Antibiotic, Isopenicillin N Synthase, Chain"/>
    <property type="match status" value="1"/>
</dbReference>
<dbReference type="InterPro" id="IPR026992">
    <property type="entry name" value="DIOX_N"/>
</dbReference>
<dbReference type="InterPro" id="IPR044861">
    <property type="entry name" value="IPNS-like_FE2OG_OXY"/>
</dbReference>
<dbReference type="InterPro" id="IPR027443">
    <property type="entry name" value="IPNS-like_sf"/>
</dbReference>
<dbReference type="InterPro" id="IPR050231">
    <property type="entry name" value="Iron_ascorbate_oxido_reductase"/>
</dbReference>
<dbReference type="InterPro" id="IPR005123">
    <property type="entry name" value="Oxoglu/Fe-dep_dioxygenase_dom"/>
</dbReference>
<dbReference type="PANTHER" id="PTHR47990">
    <property type="entry name" value="2-OXOGLUTARATE (2OG) AND FE(II)-DEPENDENT OXYGENASE SUPERFAMILY PROTEIN-RELATED"/>
    <property type="match status" value="1"/>
</dbReference>
<dbReference type="Pfam" id="PF03171">
    <property type="entry name" value="2OG-FeII_Oxy"/>
    <property type="match status" value="1"/>
</dbReference>
<dbReference type="Pfam" id="PF14226">
    <property type="entry name" value="DIOX_N"/>
    <property type="match status" value="1"/>
</dbReference>
<dbReference type="SUPFAM" id="SSF51197">
    <property type="entry name" value="Clavaminate synthase-like"/>
    <property type="match status" value="1"/>
</dbReference>
<dbReference type="PROSITE" id="PS51471">
    <property type="entry name" value="FE2OG_OXY"/>
    <property type="match status" value="1"/>
</dbReference>
<proteinExistence type="inferred from homology"/>